<dbReference type="EC" id="6.3.5.2"/>
<dbReference type="EMBL" id="AE009950">
    <property type="protein sequence ID" value="AAL81640.1"/>
    <property type="molecule type" value="Genomic_DNA"/>
</dbReference>
<dbReference type="SMR" id="Q8U0R8"/>
<dbReference type="STRING" id="186497.PF1516"/>
<dbReference type="PaxDb" id="186497-PF1516"/>
<dbReference type="KEGG" id="pfu:PF1516"/>
<dbReference type="PATRIC" id="fig|186497.12.peg.1579"/>
<dbReference type="eggNOG" id="arCOG00085">
    <property type="taxonomic scope" value="Archaea"/>
</dbReference>
<dbReference type="HOGENOM" id="CLU_014340_0_0_2"/>
<dbReference type="OrthoDB" id="33844at2157"/>
<dbReference type="PhylomeDB" id="Q8U0R8"/>
<dbReference type="UniPathway" id="UPA00189">
    <property type="reaction ID" value="UER00296"/>
</dbReference>
<dbReference type="Proteomes" id="UP000001013">
    <property type="component" value="Chromosome"/>
</dbReference>
<dbReference type="GO" id="GO:0005829">
    <property type="term" value="C:cytosol"/>
    <property type="evidence" value="ECO:0007669"/>
    <property type="project" value="TreeGrafter"/>
</dbReference>
<dbReference type="GO" id="GO:0005524">
    <property type="term" value="F:ATP binding"/>
    <property type="evidence" value="ECO:0007669"/>
    <property type="project" value="UniProtKB-UniRule"/>
</dbReference>
<dbReference type="GO" id="GO:0003921">
    <property type="term" value="F:GMP synthase activity"/>
    <property type="evidence" value="ECO:0007669"/>
    <property type="project" value="InterPro"/>
</dbReference>
<dbReference type="CDD" id="cd01997">
    <property type="entry name" value="GMP_synthase_C"/>
    <property type="match status" value="1"/>
</dbReference>
<dbReference type="FunFam" id="3.30.300.10:FF:000002">
    <property type="entry name" value="GMP synthase [glutamine-hydrolyzing]"/>
    <property type="match status" value="1"/>
</dbReference>
<dbReference type="FunFam" id="3.40.50.620:FF:000208">
    <property type="entry name" value="GMP synthase [glutamine-hydrolyzing] subunit B"/>
    <property type="match status" value="1"/>
</dbReference>
<dbReference type="Gene3D" id="3.30.300.10">
    <property type="match status" value="1"/>
</dbReference>
<dbReference type="Gene3D" id="3.40.50.620">
    <property type="entry name" value="HUPs"/>
    <property type="match status" value="1"/>
</dbReference>
<dbReference type="HAMAP" id="MF_00345">
    <property type="entry name" value="GMP_synthase_B"/>
    <property type="match status" value="1"/>
</dbReference>
<dbReference type="InterPro" id="IPR001674">
    <property type="entry name" value="GMP_synth_C"/>
</dbReference>
<dbReference type="InterPro" id="IPR026598">
    <property type="entry name" value="GMP_synthase_B"/>
</dbReference>
<dbReference type="InterPro" id="IPR025777">
    <property type="entry name" value="GMPS_ATP_PPase_dom"/>
</dbReference>
<dbReference type="InterPro" id="IPR022310">
    <property type="entry name" value="NAD/GMP_synthase"/>
</dbReference>
<dbReference type="InterPro" id="IPR014729">
    <property type="entry name" value="Rossmann-like_a/b/a_fold"/>
</dbReference>
<dbReference type="NCBIfam" id="TIGR00884">
    <property type="entry name" value="guaA_Cterm"/>
    <property type="match status" value="1"/>
</dbReference>
<dbReference type="NCBIfam" id="NF000848">
    <property type="entry name" value="PRK00074.1"/>
    <property type="match status" value="1"/>
</dbReference>
<dbReference type="PANTHER" id="PTHR11922:SF2">
    <property type="entry name" value="GMP SYNTHASE [GLUTAMINE-HYDROLYZING]"/>
    <property type="match status" value="1"/>
</dbReference>
<dbReference type="PANTHER" id="PTHR11922">
    <property type="entry name" value="GMP SYNTHASE-RELATED"/>
    <property type="match status" value="1"/>
</dbReference>
<dbReference type="Pfam" id="PF00958">
    <property type="entry name" value="GMP_synt_C"/>
    <property type="match status" value="1"/>
</dbReference>
<dbReference type="Pfam" id="PF02540">
    <property type="entry name" value="NAD_synthase"/>
    <property type="match status" value="2"/>
</dbReference>
<dbReference type="SUPFAM" id="SSF52402">
    <property type="entry name" value="Adenine nucleotide alpha hydrolases-like"/>
    <property type="match status" value="1"/>
</dbReference>
<dbReference type="SUPFAM" id="SSF54810">
    <property type="entry name" value="GMP synthetase C-terminal dimerisation domain"/>
    <property type="match status" value="1"/>
</dbReference>
<dbReference type="PROSITE" id="PS51553">
    <property type="entry name" value="GMPS_ATP_PPASE"/>
    <property type="match status" value="1"/>
</dbReference>
<comment type="function">
    <text evidence="1">Catalyzes the synthesis of GMP from XMP.</text>
</comment>
<comment type="catalytic activity">
    <reaction>
        <text>XMP + L-glutamine + ATP + H2O = GMP + L-glutamate + AMP + diphosphate + 2 H(+)</text>
        <dbReference type="Rhea" id="RHEA:11680"/>
        <dbReference type="ChEBI" id="CHEBI:15377"/>
        <dbReference type="ChEBI" id="CHEBI:15378"/>
        <dbReference type="ChEBI" id="CHEBI:29985"/>
        <dbReference type="ChEBI" id="CHEBI:30616"/>
        <dbReference type="ChEBI" id="CHEBI:33019"/>
        <dbReference type="ChEBI" id="CHEBI:57464"/>
        <dbReference type="ChEBI" id="CHEBI:58115"/>
        <dbReference type="ChEBI" id="CHEBI:58359"/>
        <dbReference type="ChEBI" id="CHEBI:456215"/>
        <dbReference type="EC" id="6.3.5.2"/>
    </reaction>
</comment>
<comment type="pathway">
    <text>Purine metabolism; GMP biosynthesis; GMP from XMP (L-Gln route): step 1/1.</text>
</comment>
<comment type="subunit">
    <text evidence="2">Heterodimer composed of a glutamine amidotransferase subunit (A) and a GMP-binding subunit (B).</text>
</comment>
<organism>
    <name type="scientific">Pyrococcus furiosus (strain ATCC 43587 / DSM 3638 / JCM 8422 / Vc1)</name>
    <dbReference type="NCBI Taxonomy" id="186497"/>
    <lineage>
        <taxon>Archaea</taxon>
        <taxon>Methanobacteriati</taxon>
        <taxon>Methanobacteriota</taxon>
        <taxon>Thermococci</taxon>
        <taxon>Thermococcales</taxon>
        <taxon>Thermococcaceae</taxon>
        <taxon>Pyrococcus</taxon>
    </lineage>
</organism>
<name>GUAAB_PYRFU</name>
<keyword id="KW-0067">ATP-binding</keyword>
<keyword id="KW-0332">GMP biosynthesis</keyword>
<keyword id="KW-0436">Ligase</keyword>
<keyword id="KW-0547">Nucleotide-binding</keyword>
<keyword id="KW-0658">Purine biosynthesis</keyword>
<keyword id="KW-1185">Reference proteome</keyword>
<evidence type="ECO:0000250" key="1"/>
<evidence type="ECO:0000305" key="2"/>
<gene>
    <name type="primary">guaAB</name>
    <name type="ordered locus">PF1516</name>
</gene>
<accession>Q8U0R8</accession>
<proteinExistence type="inferred from homology"/>
<feature type="chain" id="PRO_0000140248" description="GMP synthase [glutamine-hydrolyzing] subunit B">
    <location>
        <begin position="1"/>
        <end position="313"/>
    </location>
</feature>
<feature type="domain" description="GMPS ATP-PPase">
    <location>
        <begin position="6"/>
        <end position="190"/>
    </location>
</feature>
<feature type="binding site" evidence="1">
    <location>
        <begin position="33"/>
        <end position="39"/>
    </location>
    <ligand>
        <name>ATP</name>
        <dbReference type="ChEBI" id="CHEBI:30616"/>
    </ligand>
</feature>
<reference key="1">
    <citation type="journal article" date="1999" name="Genetics">
        <title>Divergence of the hyperthermophilic archaea Pyrococcus furiosus and P. horikoshii inferred from complete genomic sequences.</title>
        <authorList>
            <person name="Maeder D.L."/>
            <person name="Weiss R.B."/>
            <person name="Dunn D.M."/>
            <person name="Cherry J.L."/>
            <person name="Gonzalez J.M."/>
            <person name="DiRuggiero J."/>
            <person name="Robb F.T."/>
        </authorList>
    </citation>
    <scope>NUCLEOTIDE SEQUENCE [LARGE SCALE GENOMIC DNA]</scope>
    <source>
        <strain>ATCC 43587 / DSM 3638 / JCM 8422 / Vc1</strain>
    </source>
</reference>
<sequence>MKRWVKVWEKFIEEKIREIRETVGDSKAIIALSGGVDSSTAAVLAHRAIGDRLHAVFVNTGFLRKGEPEFVIKTFRDEFGMNLHYVDAQDRFFAALKGVTDPEEKRKIIGRVFIEVFEEVAKDIGAEYLIQGTIAPDWIESQGKIKSHHNVGGLPEKLNLKIIEPLRDLYKDEVRQLAKELGLPEKIYNRMPFPGPGLAVRVIGEVTPEKIRIVREANAIVEEEIEKAGLRPWQAFAVLLGVKTVGVQGDIRAYKETIAVRIVESVDGMTANAMNVPWEVLQRIAFRITSEIPEVGRVLYDITNKPPATIEFE</sequence>
<protein>
    <recommendedName>
        <fullName>GMP synthase [glutamine-hydrolyzing] subunit B</fullName>
        <ecNumber>6.3.5.2</ecNumber>
    </recommendedName>
    <alternativeName>
        <fullName>GMP synthetase</fullName>
    </alternativeName>
</protein>